<name>Y2638_HALH5</name>
<keyword id="KW-0002">3D-structure</keyword>
<keyword id="KW-1185">Reference proteome</keyword>
<reference key="1">
    <citation type="journal article" date="2000" name="Nucleic Acids Res.">
        <title>Complete genome sequence of the alkaliphilic bacterium Bacillus halodurans and genomic sequence comparison with Bacillus subtilis.</title>
        <authorList>
            <person name="Takami H."/>
            <person name="Nakasone K."/>
            <person name="Takaki Y."/>
            <person name="Maeno G."/>
            <person name="Sasaki R."/>
            <person name="Masui N."/>
            <person name="Fuji F."/>
            <person name="Hirama C."/>
            <person name="Nakamura Y."/>
            <person name="Ogasawara N."/>
            <person name="Kuhara S."/>
            <person name="Horikoshi K."/>
        </authorList>
    </citation>
    <scope>NUCLEOTIDE SEQUENCE [LARGE SCALE GENOMIC DNA]</scope>
    <source>
        <strain>ATCC BAA-125 / DSM 18197 / FERM 7344 / JCM 9153 / C-125</strain>
    </source>
</reference>
<feature type="chain" id="PRO_0000216674" description="UPF0223 protein BH2638">
    <location>
        <begin position="1"/>
        <end position="88"/>
    </location>
</feature>
<feature type="helix" evidence="2">
    <location>
        <begin position="13"/>
        <end position="30"/>
    </location>
</feature>
<feature type="helix" evidence="2">
    <location>
        <begin position="36"/>
        <end position="49"/>
    </location>
</feature>
<feature type="helix" evidence="2">
    <location>
        <begin position="53"/>
        <end position="64"/>
    </location>
</feature>
<feature type="helix" evidence="2">
    <location>
        <begin position="71"/>
        <end position="80"/>
    </location>
</feature>
<feature type="strand" evidence="2">
    <location>
        <begin position="84"/>
        <end position="86"/>
    </location>
</feature>
<gene>
    <name type="ordered locus">BH2638</name>
</gene>
<comment type="similarity">
    <text evidence="1">Belongs to the UPF0223 family.</text>
</comment>
<evidence type="ECO:0000255" key="1">
    <source>
        <dbReference type="HAMAP-Rule" id="MF_01041"/>
    </source>
</evidence>
<evidence type="ECO:0007829" key="2">
    <source>
        <dbReference type="PDB" id="2OY9"/>
    </source>
</evidence>
<sequence>MKTTLPISLDWSTEEVIDVVHFFQAIEQAYDQGIAREDLLGKYRRFKEIVPSKSEEKQLFRAYEQENDVSCYQTIKKAREEMEEHIQM</sequence>
<proteinExistence type="evidence at protein level"/>
<dbReference type="EMBL" id="BA000004">
    <property type="protein sequence ID" value="BAB06357.1"/>
    <property type="molecule type" value="Genomic_DNA"/>
</dbReference>
<dbReference type="PIR" id="F83979">
    <property type="entry name" value="F83979"/>
</dbReference>
<dbReference type="RefSeq" id="WP_010898789.1">
    <property type="nucleotide sequence ID" value="NC_002570.2"/>
</dbReference>
<dbReference type="PDB" id="2OY9">
    <property type="method" value="X-ray"/>
    <property type="resolution" value="1.60 A"/>
    <property type="chains" value="A/B=2-88"/>
</dbReference>
<dbReference type="PDBsum" id="2OY9"/>
<dbReference type="SMR" id="Q9K9K7"/>
<dbReference type="STRING" id="272558.gene:10728536"/>
<dbReference type="GeneID" id="87598151"/>
<dbReference type="KEGG" id="bha:BH2638"/>
<dbReference type="eggNOG" id="COG4476">
    <property type="taxonomic scope" value="Bacteria"/>
</dbReference>
<dbReference type="HOGENOM" id="CLU_166693_0_0_9"/>
<dbReference type="OrthoDB" id="1649074at2"/>
<dbReference type="EvolutionaryTrace" id="Q9K9K7"/>
<dbReference type="Proteomes" id="UP000001258">
    <property type="component" value="Chromosome"/>
</dbReference>
<dbReference type="Gene3D" id="1.10.220.80">
    <property type="entry name" value="BH2638-like"/>
    <property type="match status" value="1"/>
</dbReference>
<dbReference type="HAMAP" id="MF_01041">
    <property type="entry name" value="UPF0223"/>
    <property type="match status" value="1"/>
</dbReference>
<dbReference type="InterPro" id="IPR023324">
    <property type="entry name" value="BH2638-like_sf"/>
</dbReference>
<dbReference type="InterPro" id="IPR007920">
    <property type="entry name" value="UPF0223"/>
</dbReference>
<dbReference type="NCBIfam" id="NF003353">
    <property type="entry name" value="PRK04387.1"/>
    <property type="match status" value="1"/>
</dbReference>
<dbReference type="Pfam" id="PF05256">
    <property type="entry name" value="UPF0223"/>
    <property type="match status" value="1"/>
</dbReference>
<dbReference type="PIRSF" id="PIRSF037260">
    <property type="entry name" value="UPF0223"/>
    <property type="match status" value="1"/>
</dbReference>
<dbReference type="SUPFAM" id="SSF158504">
    <property type="entry name" value="BH2638-like"/>
    <property type="match status" value="1"/>
</dbReference>
<protein>
    <recommendedName>
        <fullName evidence="1">UPF0223 protein BH2638</fullName>
    </recommendedName>
</protein>
<organism>
    <name type="scientific">Halalkalibacterium halodurans (strain ATCC BAA-125 / DSM 18197 / FERM 7344 / JCM 9153 / C-125)</name>
    <name type="common">Bacillus halodurans</name>
    <dbReference type="NCBI Taxonomy" id="272558"/>
    <lineage>
        <taxon>Bacteria</taxon>
        <taxon>Bacillati</taxon>
        <taxon>Bacillota</taxon>
        <taxon>Bacilli</taxon>
        <taxon>Bacillales</taxon>
        <taxon>Bacillaceae</taxon>
        <taxon>Halalkalibacterium (ex Joshi et al. 2022)</taxon>
    </lineage>
</organism>
<accession>Q9K9K7</accession>